<sequence length="82" mass="8823">MENGAATQGEGKDPSGFLSEIIGNPVTVKLNSGVVYKGELQSVDGYMNIALEKTEEYVNGAKRRSYGDAFVRGNNVMYISAD</sequence>
<evidence type="ECO:0000250" key="1"/>
<evidence type="ECO:0000255" key="2">
    <source>
        <dbReference type="PROSITE-ProRule" id="PRU01346"/>
    </source>
</evidence>
<evidence type="ECO:0000305" key="3"/>
<proteinExistence type="inferred from homology"/>
<name>LSM6_CHAGB</name>
<keyword id="KW-0963">Cytoplasm</keyword>
<keyword id="KW-0507">mRNA processing</keyword>
<keyword id="KW-0508">mRNA splicing</keyword>
<keyword id="KW-0539">Nucleus</keyword>
<keyword id="KW-1185">Reference proteome</keyword>
<keyword id="KW-0687">Ribonucleoprotein</keyword>
<keyword id="KW-0694">RNA-binding</keyword>
<keyword id="KW-0698">rRNA processing</keyword>
<keyword id="KW-0747">Spliceosome</keyword>
<keyword id="KW-0819">tRNA processing</keyword>
<accession>Q2HAN0</accession>
<organism>
    <name type="scientific">Chaetomium globosum (strain ATCC 6205 / CBS 148.51 / DSM 1962 / NBRC 6347 / NRRL 1970)</name>
    <name type="common">Soil fungus</name>
    <dbReference type="NCBI Taxonomy" id="306901"/>
    <lineage>
        <taxon>Eukaryota</taxon>
        <taxon>Fungi</taxon>
        <taxon>Dikarya</taxon>
        <taxon>Ascomycota</taxon>
        <taxon>Pezizomycotina</taxon>
        <taxon>Sordariomycetes</taxon>
        <taxon>Sordariomycetidae</taxon>
        <taxon>Sordariales</taxon>
        <taxon>Chaetomiaceae</taxon>
        <taxon>Chaetomium</taxon>
    </lineage>
</organism>
<comment type="function">
    <text evidence="1">Component of LSm protein complexes, which are involved in RNA processing and may function in a chaperone-like manner, facilitating the efficient association of RNA processing factors with their substrates. Component of the cytoplasmic LSM1-LSM7 complex, which is thought to be involved in mRNA degradation by activating the decapping step in the 5'-to-3' mRNA decay pathway. Component of the nuclear LSM2-LSM8 complex, which is involved in splicing of nuclear mRNAs. LSM2-LSM8 associates with multiple snRNP complexes containing the U6 snRNA (U4/U6 di-snRNP, spliceosomal U4/U6.U5 tri-snRNP, and free U6 snRNP). It binds directly to the 3'-terminal U-tract of U6 snRNA and plays a role in the biogenesis and stability of the U6 snRNP and U4/U6 snRNP complexes. LSM2-LSM8 probably also is involved degradation of nuclear pre-mRNA by targeting them for decapping, and in processing of pre-tRNAs, pre-rRNAs and U3 snoRNA (By similarity).</text>
</comment>
<comment type="subunit">
    <text evidence="1">Component of the heptameric LSM1-LSM7 complex, which consists of LSM1, LSM2, LSM3, LSM4, LSM5, LSM6 and LSM7. Component of the heptameric LSM2-LSM8 complex, which consists of LSM2, LSM3, LSM4, LSM5, LSM6, LSM7 and LSM8. The LSm subunits form a seven-membered ring structure with a doughnut shape (By similarity).</text>
</comment>
<comment type="subcellular location">
    <subcellularLocation>
        <location evidence="1">Cytoplasm</location>
    </subcellularLocation>
    <subcellularLocation>
        <location evidence="1">Nucleus</location>
    </subcellularLocation>
</comment>
<comment type="similarity">
    <text evidence="3">Belongs to the snRNP Sm proteins family. SmF/LSm6 subfamily.</text>
</comment>
<comment type="sequence caution" evidence="3">
    <conflict type="erroneous gene model prediction">
        <sequence resource="EMBL-CDS" id="EAQ90789"/>
    </conflict>
</comment>
<reference key="1">
    <citation type="journal article" date="2015" name="Genome Announc.">
        <title>Draft genome sequence of the cellulolytic fungus Chaetomium globosum.</title>
        <authorList>
            <person name="Cuomo C.A."/>
            <person name="Untereiner W.A."/>
            <person name="Ma L.-J."/>
            <person name="Grabherr M."/>
            <person name="Birren B.W."/>
        </authorList>
    </citation>
    <scope>NUCLEOTIDE SEQUENCE [LARGE SCALE GENOMIC DNA]</scope>
    <source>
        <strain>ATCC 6205 / CBS 148.51 / DSM 1962 / NBRC 6347 / NRRL 1970</strain>
    </source>
</reference>
<feature type="chain" id="PRO_0000333592" description="U6 snRNA-associated Sm-like protein LSm6">
    <location>
        <begin position="1"/>
        <end position="82"/>
    </location>
</feature>
<feature type="domain" description="Sm" evidence="2">
    <location>
        <begin position="13"/>
        <end position="82"/>
    </location>
</feature>
<protein>
    <recommendedName>
        <fullName>U6 snRNA-associated Sm-like protein LSm6</fullName>
    </recommendedName>
</protein>
<dbReference type="EMBL" id="CH408030">
    <property type="protein sequence ID" value="EAQ90789.1"/>
    <property type="status" value="ALT_SEQ"/>
    <property type="molecule type" value="Genomic_DNA"/>
</dbReference>
<dbReference type="RefSeq" id="XP_001229240.1">
    <property type="nucleotide sequence ID" value="XM_001229239.1"/>
</dbReference>
<dbReference type="SMR" id="Q2HAN0"/>
<dbReference type="FunCoup" id="Q2HAN0">
    <property type="interactions" value="695"/>
</dbReference>
<dbReference type="STRING" id="306901.Q2HAN0"/>
<dbReference type="GeneID" id="4389415"/>
<dbReference type="VEuPathDB" id="FungiDB:CHGG_02724"/>
<dbReference type="eggNOG" id="KOG1783">
    <property type="taxonomic scope" value="Eukaryota"/>
</dbReference>
<dbReference type="HOGENOM" id="CLU_076902_7_4_1"/>
<dbReference type="InParanoid" id="Q2HAN0"/>
<dbReference type="OrthoDB" id="268799at2759"/>
<dbReference type="Proteomes" id="UP000001056">
    <property type="component" value="Unassembled WGS sequence"/>
</dbReference>
<dbReference type="GO" id="GO:0005730">
    <property type="term" value="C:nucleolus"/>
    <property type="evidence" value="ECO:0007669"/>
    <property type="project" value="TreeGrafter"/>
</dbReference>
<dbReference type="GO" id="GO:0000932">
    <property type="term" value="C:P-body"/>
    <property type="evidence" value="ECO:0007669"/>
    <property type="project" value="TreeGrafter"/>
</dbReference>
<dbReference type="GO" id="GO:0005732">
    <property type="term" value="C:sno(s)RNA-containing ribonucleoprotein complex"/>
    <property type="evidence" value="ECO:0007669"/>
    <property type="project" value="TreeGrafter"/>
</dbReference>
<dbReference type="GO" id="GO:0005681">
    <property type="term" value="C:spliceosomal complex"/>
    <property type="evidence" value="ECO:0007669"/>
    <property type="project" value="UniProtKB-KW"/>
</dbReference>
<dbReference type="GO" id="GO:0046540">
    <property type="term" value="C:U4/U6 x U5 tri-snRNP complex"/>
    <property type="evidence" value="ECO:0007669"/>
    <property type="project" value="TreeGrafter"/>
</dbReference>
<dbReference type="GO" id="GO:0005688">
    <property type="term" value="C:U6 snRNP"/>
    <property type="evidence" value="ECO:0007669"/>
    <property type="project" value="TreeGrafter"/>
</dbReference>
<dbReference type="GO" id="GO:0003723">
    <property type="term" value="F:RNA binding"/>
    <property type="evidence" value="ECO:0007669"/>
    <property type="project" value="UniProtKB-KW"/>
</dbReference>
<dbReference type="GO" id="GO:0030490">
    <property type="term" value="P:maturation of SSU-rRNA"/>
    <property type="evidence" value="ECO:0007669"/>
    <property type="project" value="TreeGrafter"/>
</dbReference>
<dbReference type="GO" id="GO:0000398">
    <property type="term" value="P:mRNA splicing, via spliceosome"/>
    <property type="evidence" value="ECO:0007669"/>
    <property type="project" value="InterPro"/>
</dbReference>
<dbReference type="GO" id="GO:0008033">
    <property type="term" value="P:tRNA processing"/>
    <property type="evidence" value="ECO:0007669"/>
    <property type="project" value="UniProtKB-KW"/>
</dbReference>
<dbReference type="CDD" id="cd01726">
    <property type="entry name" value="LSm6"/>
    <property type="match status" value="1"/>
</dbReference>
<dbReference type="FunFam" id="2.30.30.100:FF:000037">
    <property type="entry name" value="U6 snRNA-associated Sm-like protein LSm6"/>
    <property type="match status" value="1"/>
</dbReference>
<dbReference type="Gene3D" id="2.30.30.100">
    <property type="match status" value="1"/>
</dbReference>
<dbReference type="InterPro" id="IPR016487">
    <property type="entry name" value="Lsm6/sSmF"/>
</dbReference>
<dbReference type="InterPro" id="IPR010920">
    <property type="entry name" value="LSM_dom_sf"/>
</dbReference>
<dbReference type="InterPro" id="IPR047575">
    <property type="entry name" value="Sm"/>
</dbReference>
<dbReference type="InterPro" id="IPR001163">
    <property type="entry name" value="Sm_dom_euk/arc"/>
</dbReference>
<dbReference type="PANTHER" id="PTHR11021">
    <property type="entry name" value="SMALL NUCLEAR RIBONUCLEOPROTEIN F SNRNP-F"/>
    <property type="match status" value="1"/>
</dbReference>
<dbReference type="PANTHER" id="PTHR11021:SF1">
    <property type="entry name" value="U6 SNRNA-ASSOCIATED SM-LIKE PROTEIN LSM6"/>
    <property type="match status" value="1"/>
</dbReference>
<dbReference type="Pfam" id="PF01423">
    <property type="entry name" value="LSM"/>
    <property type="match status" value="1"/>
</dbReference>
<dbReference type="PIRSF" id="PIRSF006609">
    <property type="entry name" value="snRNP_SmF"/>
    <property type="match status" value="1"/>
</dbReference>
<dbReference type="SMART" id="SM00651">
    <property type="entry name" value="Sm"/>
    <property type="match status" value="1"/>
</dbReference>
<dbReference type="SUPFAM" id="SSF50182">
    <property type="entry name" value="Sm-like ribonucleoproteins"/>
    <property type="match status" value="1"/>
</dbReference>
<dbReference type="PROSITE" id="PS52002">
    <property type="entry name" value="SM"/>
    <property type="match status" value="1"/>
</dbReference>
<gene>
    <name type="primary">LSM6</name>
    <name type="ORF">CHGG_02724</name>
</gene>